<gene>
    <name type="primary">HCBT3</name>
</gene>
<accession>O23918</accession>
<name>HCBT3_DIACA</name>
<feature type="chain" id="PRO_0000147365" description="Anthranilate N-benzoyltransferase protein 3">
    <location>
        <begin position="1"/>
        <end position="445"/>
    </location>
</feature>
<feature type="active site" description="Proton acceptor" evidence="1">
    <location>
        <position position="164"/>
    </location>
</feature>
<feature type="active site" description="Proton acceptor" evidence="1">
    <location>
        <position position="392"/>
    </location>
</feature>
<evidence type="ECO:0000255" key="1"/>
<evidence type="ECO:0000269" key="2">
    <source>
    </source>
</evidence>
<evidence type="ECO:0000269" key="3">
    <source>
    </source>
</evidence>
<evidence type="ECO:0000305" key="4"/>
<organism>
    <name type="scientific">Dianthus caryophyllus</name>
    <name type="common">Carnation</name>
    <name type="synonym">Clove pink</name>
    <dbReference type="NCBI Taxonomy" id="3570"/>
    <lineage>
        <taxon>Eukaryota</taxon>
        <taxon>Viridiplantae</taxon>
        <taxon>Streptophyta</taxon>
        <taxon>Embryophyta</taxon>
        <taxon>Tracheophyta</taxon>
        <taxon>Spermatophyta</taxon>
        <taxon>Magnoliopsida</taxon>
        <taxon>eudicotyledons</taxon>
        <taxon>Gunneridae</taxon>
        <taxon>Pentapetalae</taxon>
        <taxon>Caryophyllales</taxon>
        <taxon>Caryophyllaceae</taxon>
        <taxon>Caryophylleae</taxon>
        <taxon>Dianthus</taxon>
    </lineage>
</organism>
<comment type="function">
    <text evidence="2">Catalyzes the formation of N-benzoylanthranilate, in the course of methoxydianthramide B, a phytoalexin. Phytoalexins are produced in response to infection by parasites, and are essential for the expression of disease resistance.</text>
</comment>
<comment type="catalytic activity">
    <reaction>
        <text>anthranilate + benzoyl-CoA = N-benzoylanthranilate + CoA</text>
        <dbReference type="Rhea" id="RHEA:21600"/>
        <dbReference type="ChEBI" id="CHEBI:16567"/>
        <dbReference type="ChEBI" id="CHEBI:17331"/>
        <dbReference type="ChEBI" id="CHEBI:57287"/>
        <dbReference type="ChEBI" id="CHEBI:57369"/>
        <dbReference type="EC" id="2.3.1.144"/>
    </reaction>
</comment>
<comment type="pathway">
    <text>Phytoalexin biosynthesis; methoxydianthramide B biosynthesis.</text>
</comment>
<comment type="induction">
    <text evidence="3">By fungal elicitors. Elicitation triggers a rapid, transient induction, reaching maximal abundances within about 0.5 hours and returning to basal levels within 4 hours.</text>
</comment>
<comment type="PTM">
    <text evidence="4">N-terminus is blocked.</text>
</comment>
<comment type="similarity">
    <text evidence="4">Belongs to the plant acyltransferase family.</text>
</comment>
<protein>
    <recommendedName>
        <fullName>Anthranilate N-benzoyltransferase protein 3</fullName>
        <ecNumber>2.3.1.144</ecNumber>
    </recommendedName>
    <alternativeName>
        <fullName>Anthranilate N-hydroxycinnamoyl/benzoyltransferase 3</fullName>
    </alternativeName>
</protein>
<dbReference type="EC" id="2.3.1.144"/>
<dbReference type="EMBL" id="Z84571">
    <property type="protein sequence ID" value="CAB06538.1"/>
    <property type="molecule type" value="mRNA"/>
</dbReference>
<dbReference type="PIR" id="T10719">
    <property type="entry name" value="T10719"/>
</dbReference>
<dbReference type="SMR" id="O23918"/>
<dbReference type="BioCyc" id="MetaCyc:MONOMER-15062"/>
<dbReference type="UniPathway" id="UPA00900"/>
<dbReference type="GO" id="GO:0047672">
    <property type="term" value="F:anthranilate N-benzoyltransferase activity"/>
    <property type="evidence" value="ECO:0007669"/>
    <property type="project" value="UniProtKB-EC"/>
</dbReference>
<dbReference type="GO" id="GO:0009813">
    <property type="term" value="P:flavonoid biosynthetic process"/>
    <property type="evidence" value="ECO:0007669"/>
    <property type="project" value="UniProtKB-KW"/>
</dbReference>
<dbReference type="FunFam" id="3.30.559.10:FF:000008">
    <property type="entry name" value="Tryptamine hydroxycinnamoyl transferase"/>
    <property type="match status" value="1"/>
</dbReference>
<dbReference type="Gene3D" id="3.30.559.10">
    <property type="entry name" value="Chloramphenicol acetyltransferase-like domain"/>
    <property type="match status" value="2"/>
</dbReference>
<dbReference type="InterPro" id="IPR023213">
    <property type="entry name" value="CAT-like_dom_sf"/>
</dbReference>
<dbReference type="InterPro" id="IPR050317">
    <property type="entry name" value="Plant_Fungal_Acyltransferase"/>
</dbReference>
<dbReference type="PANTHER" id="PTHR31642:SF11">
    <property type="entry name" value="SHIKIMATE O-HYDROXYCINNAMOYLTRANSFERASE"/>
    <property type="match status" value="1"/>
</dbReference>
<dbReference type="PANTHER" id="PTHR31642">
    <property type="entry name" value="TRICHOTHECENE 3-O-ACETYLTRANSFERASE"/>
    <property type="match status" value="1"/>
</dbReference>
<dbReference type="Pfam" id="PF02458">
    <property type="entry name" value="Transferase"/>
    <property type="match status" value="1"/>
</dbReference>
<keyword id="KW-0012">Acyltransferase</keyword>
<keyword id="KW-0903">Direct protein sequencing</keyword>
<keyword id="KW-0284">Flavonoid biosynthesis</keyword>
<keyword id="KW-0808">Transferase</keyword>
<sequence length="445" mass="50149">MSIHIKQSTMVRPAEETPNKSLWLSKIDMILRTPYSHTGAVLIYKQPDNNEDNIQPSSSMYFDANILIEALSKALVPYYPMAGRLKINGDRYEIDCNGEGALFVEAESSHVLEDFGDFRPNDELHRVMVPTCDYSKGISSFPLLMVQLTRFRCGGVSIGFAQHHHVCDRMSHFEFNNSWARIAKGLLPALEPVHDRYLHLCPRNPPQIKYTHSQFEPFVPSLPKELLDGKTSKSQTLFKLSREQINTLKQKLDWSNTTTRLSTYEVVAGHVWRSVSKARGLSDHEEIKLIMPVDGRSRINNPSLPKGYCGNVVFLAVCTATVGDLACNPLTDTAGKVQEALKGLDDDYLRSAIDHTESKPDLPVPYMGSPEKTLYPNVLVNSWGRIPYQAMDFGWGNPTFFGISNIFYDGQCFLIPSQNGDGSMTLAINLFSSHLSLFKKHFYDF</sequence>
<reference key="1">
    <citation type="journal article" date="1997" name="Plant Mol. Biol.">
        <title>Characterization and heterologous expression of hydroxycinnamoyl/benzoyl-CoA:anthranilate N-hydroxycinnamoyl/benzoyltransferase from elicited cell cultures of carnation, Dianthus caryophyllus L.</title>
        <authorList>
            <person name="Yang Q."/>
            <person name="Reinhard K."/>
            <person name="Schiltz E."/>
            <person name="Matern U."/>
        </authorList>
    </citation>
    <scope>NUCLEOTIDE SEQUENCE [MRNA]</scope>
    <scope>PROTEIN SEQUENCE OF 7-18; 27-45; 74-84; 204-209; 299-306; 343-368; 373-385 AND 441-445</scope>
    <scope>FUNCTION</scope>
</reference>
<reference key="2">
    <citation type="journal article" date="1998" name="Plant Mol. Biol.">
        <title>Anthranilate N-hydroxycinnamoyl/benzoyltransferase gene from carnation: rapid elicitation of transcription and promoter analysis.</title>
        <authorList>
            <person name="Yang Q."/>
            <person name="Grimmig B."/>
            <person name="Matern U."/>
        </authorList>
    </citation>
    <scope>INDUCTION</scope>
</reference>
<proteinExistence type="evidence at protein level"/>